<evidence type="ECO:0000250" key="1"/>
<evidence type="ECO:0000255" key="2"/>
<evidence type="ECO:0000305" key="3"/>
<gene>
    <name type="primary">PMP3</name>
    <name type="ORF">FGRRES_10222</name>
    <name type="ORF">FGSG_10222</name>
</gene>
<dbReference type="EMBL" id="DS231669">
    <property type="protein sequence ID" value="ESU16907.1"/>
    <property type="molecule type" value="Genomic_DNA"/>
</dbReference>
<dbReference type="EMBL" id="HG970332">
    <property type="protein sequence ID" value="CEF75592.1"/>
    <property type="molecule type" value="Genomic_DNA"/>
</dbReference>
<dbReference type="RefSeq" id="XP_011319169.1">
    <property type="nucleotide sequence ID" value="XM_011320867.1"/>
</dbReference>
<dbReference type="FunCoup" id="Q4HXT6">
    <property type="interactions" value="1251"/>
</dbReference>
<dbReference type="STRING" id="229533.Q4HXT6"/>
<dbReference type="GeneID" id="23557138"/>
<dbReference type="KEGG" id="fgr:FGSG_10222"/>
<dbReference type="VEuPathDB" id="FungiDB:FGRAMPH1_01G07577"/>
<dbReference type="eggNOG" id="KOG1773">
    <property type="taxonomic scope" value="Eukaryota"/>
</dbReference>
<dbReference type="HOGENOM" id="CLU_107649_6_2_1"/>
<dbReference type="InParanoid" id="Q4HXT6"/>
<dbReference type="OrthoDB" id="33821at110618"/>
<dbReference type="Proteomes" id="UP000070720">
    <property type="component" value="Chromosome 1"/>
</dbReference>
<dbReference type="GO" id="GO:0005886">
    <property type="term" value="C:plasma membrane"/>
    <property type="evidence" value="ECO:0007669"/>
    <property type="project" value="UniProtKB-SubCell"/>
</dbReference>
<dbReference type="InterPro" id="IPR000612">
    <property type="entry name" value="PMP3"/>
</dbReference>
<dbReference type="PANTHER" id="PTHR21659">
    <property type="entry name" value="HYDROPHOBIC PROTEIN RCI2 LOW TEMPERATURE AND SALT RESPONSIVE PROTEIN LTI6 -RELATED"/>
    <property type="match status" value="1"/>
</dbReference>
<dbReference type="PANTHER" id="PTHR21659:SF42">
    <property type="entry name" value="UPF0057 MEMBRANE PROTEIN ZK632.10-RELATED"/>
    <property type="match status" value="1"/>
</dbReference>
<dbReference type="Pfam" id="PF01679">
    <property type="entry name" value="Pmp3"/>
    <property type="match status" value="1"/>
</dbReference>
<dbReference type="PROSITE" id="PS01309">
    <property type="entry name" value="UPF0057"/>
    <property type="match status" value="1"/>
</dbReference>
<comment type="function">
    <text evidence="1">Plays a role in the regulation of membrane potential. Could mediate a proton leak (By similarity).</text>
</comment>
<comment type="subcellular location">
    <subcellularLocation>
        <location evidence="3">Cell membrane</location>
        <topology evidence="3">Multi-pass membrane protein</topology>
    </subcellularLocation>
</comment>
<comment type="similarity">
    <text evidence="3">Belongs to the UPF0057 (PMP3) family.</text>
</comment>
<sequence length="57" mass="6279">MPFTASDICKIILAIILPPVGVFLERGCGADFFINILLTILGYIPGIIHALYIILKY</sequence>
<name>PMP3_GIBZE</name>
<accession>Q4HXT6</accession>
<accession>A0A0E0RWG7</accession>
<accession>I1S0J4</accession>
<accession>V6RSC5</accession>
<protein>
    <recommendedName>
        <fullName>Plasma membrane proteolipid 3</fullName>
    </recommendedName>
</protein>
<organism>
    <name type="scientific">Gibberella zeae (strain ATCC MYA-4620 / CBS 123657 / FGSC 9075 / NRRL 31084 / PH-1)</name>
    <name type="common">Wheat head blight fungus</name>
    <name type="synonym">Fusarium graminearum</name>
    <dbReference type="NCBI Taxonomy" id="229533"/>
    <lineage>
        <taxon>Eukaryota</taxon>
        <taxon>Fungi</taxon>
        <taxon>Dikarya</taxon>
        <taxon>Ascomycota</taxon>
        <taxon>Pezizomycotina</taxon>
        <taxon>Sordariomycetes</taxon>
        <taxon>Hypocreomycetidae</taxon>
        <taxon>Hypocreales</taxon>
        <taxon>Nectriaceae</taxon>
        <taxon>Fusarium</taxon>
    </lineage>
</organism>
<reference key="1">
    <citation type="journal article" date="2007" name="Science">
        <title>The Fusarium graminearum genome reveals a link between localized polymorphism and pathogen specialization.</title>
        <authorList>
            <person name="Cuomo C.A."/>
            <person name="Gueldener U."/>
            <person name="Xu J.-R."/>
            <person name="Trail F."/>
            <person name="Turgeon B.G."/>
            <person name="Di Pietro A."/>
            <person name="Walton J.D."/>
            <person name="Ma L.-J."/>
            <person name="Baker S.E."/>
            <person name="Rep M."/>
            <person name="Adam G."/>
            <person name="Antoniw J."/>
            <person name="Baldwin T."/>
            <person name="Calvo S.E."/>
            <person name="Chang Y.-L."/>
            <person name="DeCaprio D."/>
            <person name="Gale L.R."/>
            <person name="Gnerre S."/>
            <person name="Goswami R.S."/>
            <person name="Hammond-Kosack K."/>
            <person name="Harris L.J."/>
            <person name="Hilburn K."/>
            <person name="Kennell J.C."/>
            <person name="Kroken S."/>
            <person name="Magnuson J.K."/>
            <person name="Mannhaupt G."/>
            <person name="Mauceli E.W."/>
            <person name="Mewes H.-W."/>
            <person name="Mitterbauer R."/>
            <person name="Muehlbauer G."/>
            <person name="Muensterkoetter M."/>
            <person name="Nelson D."/>
            <person name="O'Donnell K."/>
            <person name="Ouellet T."/>
            <person name="Qi W."/>
            <person name="Quesneville H."/>
            <person name="Roncero M.I.G."/>
            <person name="Seong K.-Y."/>
            <person name="Tetko I.V."/>
            <person name="Urban M."/>
            <person name="Waalwijk C."/>
            <person name="Ward T.J."/>
            <person name="Yao J."/>
            <person name="Birren B.W."/>
            <person name="Kistler H.C."/>
        </authorList>
    </citation>
    <scope>NUCLEOTIDE SEQUENCE [LARGE SCALE GENOMIC DNA]</scope>
    <source>
        <strain>ATCC MYA-4620 / CBS 123657 / FGSC 9075 / NRRL 31084 / PH-1</strain>
    </source>
</reference>
<reference key="2">
    <citation type="journal article" date="2010" name="Nature">
        <title>Comparative genomics reveals mobile pathogenicity chromosomes in Fusarium.</title>
        <authorList>
            <person name="Ma L.-J."/>
            <person name="van der Does H.C."/>
            <person name="Borkovich K.A."/>
            <person name="Coleman J.J."/>
            <person name="Daboussi M.-J."/>
            <person name="Di Pietro A."/>
            <person name="Dufresne M."/>
            <person name="Freitag M."/>
            <person name="Grabherr M."/>
            <person name="Henrissat B."/>
            <person name="Houterman P.M."/>
            <person name="Kang S."/>
            <person name="Shim W.-B."/>
            <person name="Woloshuk C."/>
            <person name="Xie X."/>
            <person name="Xu J.-R."/>
            <person name="Antoniw J."/>
            <person name="Baker S.E."/>
            <person name="Bluhm B.H."/>
            <person name="Breakspear A."/>
            <person name="Brown D.W."/>
            <person name="Butchko R.A.E."/>
            <person name="Chapman S."/>
            <person name="Coulson R."/>
            <person name="Coutinho P.M."/>
            <person name="Danchin E.G.J."/>
            <person name="Diener A."/>
            <person name="Gale L.R."/>
            <person name="Gardiner D.M."/>
            <person name="Goff S."/>
            <person name="Hammond-Kosack K.E."/>
            <person name="Hilburn K."/>
            <person name="Hua-Van A."/>
            <person name="Jonkers W."/>
            <person name="Kazan K."/>
            <person name="Kodira C.D."/>
            <person name="Koehrsen M."/>
            <person name="Kumar L."/>
            <person name="Lee Y.-H."/>
            <person name="Li L."/>
            <person name="Manners J.M."/>
            <person name="Miranda-Saavedra D."/>
            <person name="Mukherjee M."/>
            <person name="Park G."/>
            <person name="Park J."/>
            <person name="Park S.-Y."/>
            <person name="Proctor R.H."/>
            <person name="Regev A."/>
            <person name="Ruiz-Roldan M.C."/>
            <person name="Sain D."/>
            <person name="Sakthikumar S."/>
            <person name="Sykes S."/>
            <person name="Schwartz D.C."/>
            <person name="Turgeon B.G."/>
            <person name="Wapinski I."/>
            <person name="Yoder O."/>
            <person name="Young S."/>
            <person name="Zeng Q."/>
            <person name="Zhou S."/>
            <person name="Galagan J."/>
            <person name="Cuomo C.A."/>
            <person name="Kistler H.C."/>
            <person name="Rep M."/>
        </authorList>
    </citation>
    <scope>GENOME REANNOTATION</scope>
    <source>
        <strain>ATCC MYA-4620 / CBS 123657 / FGSC 9075 / NRRL 31084 / PH-1</strain>
    </source>
</reference>
<reference key="3">
    <citation type="journal article" date="2015" name="BMC Genomics">
        <title>The completed genome sequence of the pathogenic ascomycete fungus Fusarium graminearum.</title>
        <authorList>
            <person name="King R."/>
            <person name="Urban M."/>
            <person name="Hammond-Kosack M.C.U."/>
            <person name="Hassani-Pak K."/>
            <person name="Hammond-Kosack K.E."/>
        </authorList>
    </citation>
    <scope>NUCLEOTIDE SEQUENCE [LARGE SCALE GENOMIC DNA]</scope>
    <source>
        <strain>ATCC MYA-4620 / CBS 123657 / FGSC 9075 / NRRL 31084 / PH-1</strain>
    </source>
</reference>
<keyword id="KW-1003">Cell membrane</keyword>
<keyword id="KW-0472">Membrane</keyword>
<keyword id="KW-1185">Reference proteome</keyword>
<keyword id="KW-0812">Transmembrane</keyword>
<keyword id="KW-1133">Transmembrane helix</keyword>
<feature type="chain" id="PRO_0000247912" description="Plasma membrane proteolipid 3">
    <location>
        <begin position="1"/>
        <end position="57"/>
    </location>
</feature>
<feature type="transmembrane region" description="Helical" evidence="2">
    <location>
        <begin position="3"/>
        <end position="23"/>
    </location>
</feature>
<feature type="transmembrane region" description="Helical" evidence="2">
    <location>
        <begin position="34"/>
        <end position="54"/>
    </location>
</feature>
<proteinExistence type="inferred from homology"/>